<organism>
    <name type="scientific">Caenorhabditis elegans</name>
    <dbReference type="NCBI Taxonomy" id="6239"/>
    <lineage>
        <taxon>Eukaryota</taxon>
        <taxon>Metazoa</taxon>
        <taxon>Ecdysozoa</taxon>
        <taxon>Nematoda</taxon>
        <taxon>Chromadorea</taxon>
        <taxon>Rhabditida</taxon>
        <taxon>Rhabditina</taxon>
        <taxon>Rhabditomorpha</taxon>
        <taxon>Rhabditoidea</taxon>
        <taxon>Rhabditidae</taxon>
        <taxon>Peloderinae</taxon>
        <taxon>Caenorhabditis</taxon>
    </lineage>
</organism>
<reference key="1">
    <citation type="journal article" date="1998" name="Science">
        <title>Genome sequence of the nematode C. elegans: a platform for investigating biology.</title>
        <authorList>
            <consortium name="The C. elegans sequencing consortium"/>
        </authorList>
    </citation>
    <scope>NUCLEOTIDE SEQUENCE [LARGE SCALE GENOMIC DNA]</scope>
    <source>
        <strain>Bristol N2</strain>
    </source>
</reference>
<dbReference type="EC" id="6.2.1.4" evidence="1"/>
<dbReference type="EC" id="6.2.1.5" evidence="1"/>
<dbReference type="EMBL" id="Z70203">
    <property type="protein sequence ID" value="CAA94107.1"/>
    <property type="molecule type" value="Genomic_DNA"/>
</dbReference>
<dbReference type="PIR" id="T18966">
    <property type="entry name" value="T18966"/>
</dbReference>
<dbReference type="RefSeq" id="NP_510450.1">
    <property type="nucleotide sequence ID" value="NM_078049.7"/>
</dbReference>
<dbReference type="SMR" id="P53596"/>
<dbReference type="BioGRID" id="46467">
    <property type="interactions" value="20"/>
</dbReference>
<dbReference type="FunCoup" id="P53596">
    <property type="interactions" value="2594"/>
</dbReference>
<dbReference type="STRING" id="6239.C05G5.4.2"/>
<dbReference type="PaxDb" id="6239-C05G5.4"/>
<dbReference type="PeptideAtlas" id="P53596"/>
<dbReference type="EnsemblMetazoa" id="C05G5.4.1">
    <property type="protein sequence ID" value="C05G5.4.1"/>
    <property type="gene ID" value="WBGene00007350"/>
</dbReference>
<dbReference type="GeneID" id="181570"/>
<dbReference type="KEGG" id="cel:CELE_C05G5.4"/>
<dbReference type="UCSC" id="C05G5.4">
    <property type="organism name" value="c. elegans"/>
</dbReference>
<dbReference type="AGR" id="WB:WBGene00007350"/>
<dbReference type="CTD" id="181570"/>
<dbReference type="WormBase" id="C05G5.4">
    <property type="protein sequence ID" value="CE05227"/>
    <property type="gene ID" value="WBGene00007350"/>
    <property type="gene designation" value="sucl-1"/>
</dbReference>
<dbReference type="eggNOG" id="KOG1255">
    <property type="taxonomic scope" value="Eukaryota"/>
</dbReference>
<dbReference type="GeneTree" id="ENSGT00940000156351"/>
<dbReference type="HOGENOM" id="CLU_052104_1_0_1"/>
<dbReference type="InParanoid" id="P53596"/>
<dbReference type="OMA" id="MPGSIFR"/>
<dbReference type="OrthoDB" id="1664372at2759"/>
<dbReference type="PhylomeDB" id="P53596"/>
<dbReference type="Reactome" id="R-CEL-71403">
    <property type="pathway name" value="Citric acid cycle (TCA cycle)"/>
</dbReference>
<dbReference type="UniPathway" id="UPA00223">
    <property type="reaction ID" value="UER00999"/>
</dbReference>
<dbReference type="PRO" id="PR:P53596"/>
<dbReference type="Proteomes" id="UP000001940">
    <property type="component" value="Chromosome X"/>
</dbReference>
<dbReference type="Bgee" id="WBGene00007350">
    <property type="expression patterns" value="Expressed in pharyngeal muscle cell (C elegans) and 4 other cell types or tissues"/>
</dbReference>
<dbReference type="GO" id="GO:0005739">
    <property type="term" value="C:mitochondrion"/>
    <property type="evidence" value="ECO:0007005"/>
    <property type="project" value="WormBase"/>
</dbReference>
<dbReference type="GO" id="GO:0009361">
    <property type="term" value="C:succinate-CoA ligase complex (ADP-forming)"/>
    <property type="evidence" value="ECO:0000318"/>
    <property type="project" value="GO_Central"/>
</dbReference>
<dbReference type="GO" id="GO:0000166">
    <property type="term" value="F:nucleotide binding"/>
    <property type="evidence" value="ECO:0007669"/>
    <property type="project" value="UniProtKB-KW"/>
</dbReference>
<dbReference type="GO" id="GO:0004775">
    <property type="term" value="F:succinate-CoA ligase (ADP-forming) activity"/>
    <property type="evidence" value="ECO:0000318"/>
    <property type="project" value="GO_Central"/>
</dbReference>
<dbReference type="GO" id="GO:0004776">
    <property type="term" value="F:succinate-CoA ligase (GDP-forming) activity"/>
    <property type="evidence" value="ECO:0000318"/>
    <property type="project" value="GO_Central"/>
</dbReference>
<dbReference type="GO" id="GO:0006099">
    <property type="term" value="P:tricarboxylic acid cycle"/>
    <property type="evidence" value="ECO:0000318"/>
    <property type="project" value="GO_Central"/>
</dbReference>
<dbReference type="FunFam" id="3.40.50.720:FF:000002">
    <property type="entry name" value="Succinate--CoA ligase [ADP-forming] subunit alpha"/>
    <property type="match status" value="1"/>
</dbReference>
<dbReference type="FunFam" id="3.40.50.261:FF:000005">
    <property type="entry name" value="Succinate--CoA ligase [ADP-forming] subunit alpha, mitochondrial"/>
    <property type="match status" value="1"/>
</dbReference>
<dbReference type="Gene3D" id="3.40.50.720">
    <property type="entry name" value="NAD(P)-binding Rossmann-like Domain"/>
    <property type="match status" value="1"/>
</dbReference>
<dbReference type="Gene3D" id="3.40.50.261">
    <property type="entry name" value="Succinyl-CoA synthetase domains"/>
    <property type="match status" value="1"/>
</dbReference>
<dbReference type="HAMAP" id="MF_01988">
    <property type="entry name" value="Succ_CoA_alpha"/>
    <property type="match status" value="1"/>
</dbReference>
<dbReference type="InterPro" id="IPR017440">
    <property type="entry name" value="Cit_synth/succinyl-CoA_lig_AS"/>
</dbReference>
<dbReference type="InterPro" id="IPR033847">
    <property type="entry name" value="Citrt_syn/SCS-alpha_CS"/>
</dbReference>
<dbReference type="InterPro" id="IPR003781">
    <property type="entry name" value="CoA-bd"/>
</dbReference>
<dbReference type="InterPro" id="IPR005810">
    <property type="entry name" value="CoA_lig_alpha"/>
</dbReference>
<dbReference type="InterPro" id="IPR036291">
    <property type="entry name" value="NAD(P)-bd_dom_sf"/>
</dbReference>
<dbReference type="InterPro" id="IPR005811">
    <property type="entry name" value="SUCC_ACL_C"/>
</dbReference>
<dbReference type="InterPro" id="IPR016102">
    <property type="entry name" value="Succinyl-CoA_synth-like"/>
</dbReference>
<dbReference type="NCBIfam" id="NF004230">
    <property type="entry name" value="PRK05678.1"/>
    <property type="match status" value="1"/>
</dbReference>
<dbReference type="NCBIfam" id="TIGR01019">
    <property type="entry name" value="sucCoAalpha"/>
    <property type="match status" value="1"/>
</dbReference>
<dbReference type="PANTHER" id="PTHR11117:SF2">
    <property type="entry name" value="SUCCINATE--COA LIGASE [ADP_GDP-FORMING] SUBUNIT ALPHA, MITOCHONDRIAL"/>
    <property type="match status" value="1"/>
</dbReference>
<dbReference type="PANTHER" id="PTHR11117">
    <property type="entry name" value="SUCCINYL-COA LIGASE SUBUNIT ALPHA"/>
    <property type="match status" value="1"/>
</dbReference>
<dbReference type="Pfam" id="PF02629">
    <property type="entry name" value="CoA_binding"/>
    <property type="match status" value="1"/>
</dbReference>
<dbReference type="Pfam" id="PF00549">
    <property type="entry name" value="Ligase_CoA"/>
    <property type="match status" value="1"/>
</dbReference>
<dbReference type="PIRSF" id="PIRSF001553">
    <property type="entry name" value="SucCS_alpha"/>
    <property type="match status" value="1"/>
</dbReference>
<dbReference type="PRINTS" id="PR01798">
    <property type="entry name" value="SCOASYNTHASE"/>
</dbReference>
<dbReference type="SMART" id="SM00881">
    <property type="entry name" value="CoA_binding"/>
    <property type="match status" value="1"/>
</dbReference>
<dbReference type="SUPFAM" id="SSF51735">
    <property type="entry name" value="NAD(P)-binding Rossmann-fold domains"/>
    <property type="match status" value="1"/>
</dbReference>
<dbReference type="SUPFAM" id="SSF52210">
    <property type="entry name" value="Succinyl-CoA synthetase domains"/>
    <property type="match status" value="1"/>
</dbReference>
<dbReference type="PROSITE" id="PS01216">
    <property type="entry name" value="SUCCINYL_COA_LIG_1"/>
    <property type="match status" value="1"/>
</dbReference>
<dbReference type="PROSITE" id="PS00399">
    <property type="entry name" value="SUCCINYL_COA_LIG_2"/>
    <property type="match status" value="1"/>
</dbReference>
<protein>
    <recommendedName>
        <fullName evidence="1">Succinate--CoA ligase [ADP/GDP-forming] subunit alpha, mitochondrial</fullName>
        <ecNumber evidence="1">6.2.1.4</ecNumber>
        <ecNumber evidence="1">6.2.1.5</ecNumber>
    </recommendedName>
    <alternativeName>
        <fullName evidence="1">Succinyl-CoA synthetase subunit alpha</fullName>
        <shortName evidence="1">SCS-alpha</shortName>
    </alternativeName>
</protein>
<evidence type="ECO:0000255" key="1">
    <source>
        <dbReference type="HAMAP-Rule" id="MF_03222"/>
    </source>
</evidence>
<evidence type="ECO:0000312" key="2">
    <source>
        <dbReference type="WormBase" id="C05G5.4"/>
    </source>
</evidence>
<name>SUCA_CAEEL</name>
<sequence length="322" mass="33798">MLSQQIANNARTLQKGAARFYNSTYNNLKINKDTKVIVQGFTGKQGTFHGKQMLEYNTKVVGGVNANKAGTEHLGLPVFKNVSEARNKTGADASVIYVPASAAGSAIEEAMDAEIPLVVCITEGIPQHDMVRVKSRLLKQNKTRLVGPNCPGIISADQCKIGIMPGHIHKRGCIGIVSRSGTLTYEAVHQTTQVGFGQTLCVGIGGDPFNGTNFIDCLNVFLEDPETKGIILIGEIGGSAEEEAAAYLKEHNSGANRKPVVSFIAGVTAPPGRRMGHAGAIISGGKGTAADKINALREAGVVVTDSPAKLGTSMATAFLGKI</sequence>
<keyword id="KW-0436">Ligase</keyword>
<keyword id="KW-0496">Mitochondrion</keyword>
<keyword id="KW-0547">Nucleotide-binding</keyword>
<keyword id="KW-1185">Reference proteome</keyword>
<keyword id="KW-0809">Transit peptide</keyword>
<keyword id="KW-0816">Tricarboxylic acid cycle</keyword>
<proteinExistence type="inferred from homology"/>
<comment type="function">
    <text evidence="1">Succinyl-CoA synthetase functions in the citric acid cycle (TCA), coupling the hydrolysis of succinyl-CoA to the synthesis of either ATP or GTP and thus represents the only step of substrate-level phosphorylation in the TCA. The alpha subunit of the enzyme binds the substrates coenzyme A and phosphate, while succinate binding and specificity for either ATP or GTP is provided by different beta subunits.</text>
</comment>
<comment type="catalytic activity">
    <reaction evidence="1">
        <text>succinate + ATP + CoA = succinyl-CoA + ADP + phosphate</text>
        <dbReference type="Rhea" id="RHEA:17661"/>
        <dbReference type="ChEBI" id="CHEBI:30031"/>
        <dbReference type="ChEBI" id="CHEBI:30616"/>
        <dbReference type="ChEBI" id="CHEBI:43474"/>
        <dbReference type="ChEBI" id="CHEBI:57287"/>
        <dbReference type="ChEBI" id="CHEBI:57292"/>
        <dbReference type="ChEBI" id="CHEBI:456216"/>
        <dbReference type="EC" id="6.2.1.5"/>
    </reaction>
</comment>
<comment type="catalytic activity">
    <reaction evidence="1">
        <text>GTP + succinate + CoA = succinyl-CoA + GDP + phosphate</text>
        <dbReference type="Rhea" id="RHEA:22120"/>
        <dbReference type="ChEBI" id="CHEBI:30031"/>
        <dbReference type="ChEBI" id="CHEBI:37565"/>
        <dbReference type="ChEBI" id="CHEBI:43474"/>
        <dbReference type="ChEBI" id="CHEBI:57287"/>
        <dbReference type="ChEBI" id="CHEBI:57292"/>
        <dbReference type="ChEBI" id="CHEBI:58189"/>
        <dbReference type="EC" id="6.2.1.4"/>
    </reaction>
</comment>
<comment type="pathway">
    <text evidence="1">Carbohydrate metabolism; tricarboxylic acid cycle; succinate from succinyl-CoA (ligase route): step 1/1.</text>
</comment>
<comment type="subunit">
    <text evidence="1">Heterodimer of an alpha and a beta subunit. Different beta subunits determine nucleotide specificity. Together with an ATP-specific beta subunit, forms an ADP-forming succinyl-CoA synthetase (A-SCS). Together with a GTP-specific beta subunit forms a GDP-forming succinyl-CoA synthetase (G-SCS).</text>
</comment>
<comment type="subcellular location">
    <subcellularLocation>
        <location evidence="1">Mitochondrion</location>
    </subcellularLocation>
</comment>
<comment type="similarity">
    <text evidence="1">Belongs to the succinate/malate CoA ligase alpha subunit family.</text>
</comment>
<gene>
    <name evidence="2" type="primary">sucl-1</name>
    <name type="ORF">C05G5.4</name>
</gene>
<feature type="transit peptide" description="Mitochondrion" evidence="1">
    <location>
        <begin position="1"/>
        <end position="21"/>
    </location>
</feature>
<feature type="chain" id="PRO_0000033337" description="Succinate--CoA ligase [ADP/GDP-forming] subunit alpha, mitochondrial" evidence="1">
    <location>
        <begin position="22"/>
        <end position="322"/>
    </location>
</feature>
<feature type="active site" description="Tele-phosphohistidine intermediate" evidence="1">
    <location>
        <position position="277"/>
    </location>
</feature>
<feature type="binding site" evidence="1">
    <location>
        <begin position="42"/>
        <end position="45"/>
    </location>
    <ligand>
        <name>CoA</name>
        <dbReference type="ChEBI" id="CHEBI:57287"/>
    </ligand>
</feature>
<feature type="binding site" evidence="1">
    <location>
        <position position="68"/>
    </location>
    <ligand>
        <name>CoA</name>
        <dbReference type="ChEBI" id="CHEBI:57287"/>
    </ligand>
</feature>
<feature type="binding site" evidence="1">
    <location>
        <begin position="121"/>
        <end position="123"/>
    </location>
    <ligand>
        <name>CoA</name>
        <dbReference type="ChEBI" id="CHEBI:57287"/>
    </ligand>
</feature>
<feature type="binding site" evidence="1">
    <location>
        <position position="185"/>
    </location>
    <ligand>
        <name>substrate</name>
        <note>ligand shared with subunit beta</note>
    </ligand>
</feature>
<accession>P53596</accession>